<reference key="1">
    <citation type="journal article" date="1999" name="Mol. Cell. Biol.">
        <title>Alternative splicing results in differential expression, activity, and localization of the two forms of arginyl-tRNA-protein transferase, a component of the N-end rule pathway.</title>
        <authorList>
            <person name="Kwon Y.T."/>
            <person name="Kashina A.S."/>
            <person name="Varshavsky A."/>
        </authorList>
    </citation>
    <scope>NUCLEOTIDE SEQUENCE [MRNA] (ISOFORM A)</scope>
</reference>
<reference key="2">
    <citation type="journal article" date="2000" name="Science">
        <title>The genome sequence of Drosophila melanogaster.</title>
        <authorList>
            <person name="Adams M.D."/>
            <person name="Celniker S.E."/>
            <person name="Holt R.A."/>
            <person name="Evans C.A."/>
            <person name="Gocayne J.D."/>
            <person name="Amanatides P.G."/>
            <person name="Scherer S.E."/>
            <person name="Li P.W."/>
            <person name="Hoskins R.A."/>
            <person name="Galle R.F."/>
            <person name="George R.A."/>
            <person name="Lewis S.E."/>
            <person name="Richards S."/>
            <person name="Ashburner M."/>
            <person name="Henderson S.N."/>
            <person name="Sutton G.G."/>
            <person name="Wortman J.R."/>
            <person name="Yandell M.D."/>
            <person name="Zhang Q."/>
            <person name="Chen L.X."/>
            <person name="Brandon R.C."/>
            <person name="Rogers Y.-H.C."/>
            <person name="Blazej R.G."/>
            <person name="Champe M."/>
            <person name="Pfeiffer B.D."/>
            <person name="Wan K.H."/>
            <person name="Doyle C."/>
            <person name="Baxter E.G."/>
            <person name="Helt G."/>
            <person name="Nelson C.R."/>
            <person name="Miklos G.L.G."/>
            <person name="Abril J.F."/>
            <person name="Agbayani A."/>
            <person name="An H.-J."/>
            <person name="Andrews-Pfannkoch C."/>
            <person name="Baldwin D."/>
            <person name="Ballew R.M."/>
            <person name="Basu A."/>
            <person name="Baxendale J."/>
            <person name="Bayraktaroglu L."/>
            <person name="Beasley E.M."/>
            <person name="Beeson K.Y."/>
            <person name="Benos P.V."/>
            <person name="Berman B.P."/>
            <person name="Bhandari D."/>
            <person name="Bolshakov S."/>
            <person name="Borkova D."/>
            <person name="Botchan M.R."/>
            <person name="Bouck J."/>
            <person name="Brokstein P."/>
            <person name="Brottier P."/>
            <person name="Burtis K.C."/>
            <person name="Busam D.A."/>
            <person name="Butler H."/>
            <person name="Cadieu E."/>
            <person name="Center A."/>
            <person name="Chandra I."/>
            <person name="Cherry J.M."/>
            <person name="Cawley S."/>
            <person name="Dahlke C."/>
            <person name="Davenport L.B."/>
            <person name="Davies P."/>
            <person name="de Pablos B."/>
            <person name="Delcher A."/>
            <person name="Deng Z."/>
            <person name="Mays A.D."/>
            <person name="Dew I."/>
            <person name="Dietz S.M."/>
            <person name="Dodson K."/>
            <person name="Doup L.E."/>
            <person name="Downes M."/>
            <person name="Dugan-Rocha S."/>
            <person name="Dunkov B.C."/>
            <person name="Dunn P."/>
            <person name="Durbin K.J."/>
            <person name="Evangelista C.C."/>
            <person name="Ferraz C."/>
            <person name="Ferriera S."/>
            <person name="Fleischmann W."/>
            <person name="Fosler C."/>
            <person name="Gabrielian A.E."/>
            <person name="Garg N.S."/>
            <person name="Gelbart W.M."/>
            <person name="Glasser K."/>
            <person name="Glodek A."/>
            <person name="Gong F."/>
            <person name="Gorrell J.H."/>
            <person name="Gu Z."/>
            <person name="Guan P."/>
            <person name="Harris M."/>
            <person name="Harris N.L."/>
            <person name="Harvey D.A."/>
            <person name="Heiman T.J."/>
            <person name="Hernandez J.R."/>
            <person name="Houck J."/>
            <person name="Hostin D."/>
            <person name="Houston K.A."/>
            <person name="Howland T.J."/>
            <person name="Wei M.-H."/>
            <person name="Ibegwam C."/>
            <person name="Jalali M."/>
            <person name="Kalush F."/>
            <person name="Karpen G.H."/>
            <person name="Ke Z."/>
            <person name="Kennison J.A."/>
            <person name="Ketchum K.A."/>
            <person name="Kimmel B.E."/>
            <person name="Kodira C.D."/>
            <person name="Kraft C.L."/>
            <person name="Kravitz S."/>
            <person name="Kulp D."/>
            <person name="Lai Z."/>
            <person name="Lasko P."/>
            <person name="Lei Y."/>
            <person name="Levitsky A.A."/>
            <person name="Li J.H."/>
            <person name="Li Z."/>
            <person name="Liang Y."/>
            <person name="Lin X."/>
            <person name="Liu X."/>
            <person name="Mattei B."/>
            <person name="McIntosh T.C."/>
            <person name="McLeod M.P."/>
            <person name="McPherson D."/>
            <person name="Merkulov G."/>
            <person name="Milshina N.V."/>
            <person name="Mobarry C."/>
            <person name="Morris J."/>
            <person name="Moshrefi A."/>
            <person name="Mount S.M."/>
            <person name="Moy M."/>
            <person name="Murphy B."/>
            <person name="Murphy L."/>
            <person name="Muzny D.M."/>
            <person name="Nelson D.L."/>
            <person name="Nelson D.R."/>
            <person name="Nelson K.A."/>
            <person name="Nixon K."/>
            <person name="Nusskern D.R."/>
            <person name="Pacleb J.M."/>
            <person name="Palazzolo M."/>
            <person name="Pittman G.S."/>
            <person name="Pan S."/>
            <person name="Pollard J."/>
            <person name="Puri V."/>
            <person name="Reese M.G."/>
            <person name="Reinert K."/>
            <person name="Remington K."/>
            <person name="Saunders R.D.C."/>
            <person name="Scheeler F."/>
            <person name="Shen H."/>
            <person name="Shue B.C."/>
            <person name="Siden-Kiamos I."/>
            <person name="Simpson M."/>
            <person name="Skupski M.P."/>
            <person name="Smith T.J."/>
            <person name="Spier E."/>
            <person name="Spradling A.C."/>
            <person name="Stapleton M."/>
            <person name="Strong R."/>
            <person name="Sun E."/>
            <person name="Svirskas R."/>
            <person name="Tector C."/>
            <person name="Turner R."/>
            <person name="Venter E."/>
            <person name="Wang A.H."/>
            <person name="Wang X."/>
            <person name="Wang Z.-Y."/>
            <person name="Wassarman D.A."/>
            <person name="Weinstock G.M."/>
            <person name="Weissenbach J."/>
            <person name="Williams S.M."/>
            <person name="Woodage T."/>
            <person name="Worley K.C."/>
            <person name="Wu D."/>
            <person name="Yang S."/>
            <person name="Yao Q.A."/>
            <person name="Ye J."/>
            <person name="Yeh R.-F."/>
            <person name="Zaveri J.S."/>
            <person name="Zhan M."/>
            <person name="Zhang G."/>
            <person name="Zhao Q."/>
            <person name="Zheng L."/>
            <person name="Zheng X.H."/>
            <person name="Zhong F.N."/>
            <person name="Zhong W."/>
            <person name="Zhou X."/>
            <person name="Zhu S.C."/>
            <person name="Zhu X."/>
            <person name="Smith H.O."/>
            <person name="Gibbs R.A."/>
            <person name="Myers E.W."/>
            <person name="Rubin G.M."/>
            <person name="Venter J.C."/>
        </authorList>
    </citation>
    <scope>NUCLEOTIDE SEQUENCE [LARGE SCALE GENOMIC DNA]</scope>
    <source>
        <strain>Berkeley</strain>
    </source>
</reference>
<reference key="3">
    <citation type="journal article" date="2002" name="Genome Biol.">
        <title>Annotation of the Drosophila melanogaster euchromatic genome: a systematic review.</title>
        <authorList>
            <person name="Misra S."/>
            <person name="Crosby M.A."/>
            <person name="Mungall C.J."/>
            <person name="Matthews B.B."/>
            <person name="Campbell K.S."/>
            <person name="Hradecky P."/>
            <person name="Huang Y."/>
            <person name="Kaminker J.S."/>
            <person name="Millburn G.H."/>
            <person name="Prochnik S.E."/>
            <person name="Smith C.D."/>
            <person name="Tupy J.L."/>
            <person name="Whitfield E.J."/>
            <person name="Bayraktaroglu L."/>
            <person name="Berman B.P."/>
            <person name="Bettencourt B.R."/>
            <person name="Celniker S.E."/>
            <person name="de Grey A.D.N.J."/>
            <person name="Drysdale R.A."/>
            <person name="Harris N.L."/>
            <person name="Richter J."/>
            <person name="Russo S."/>
            <person name="Schroeder A.J."/>
            <person name="Shu S.Q."/>
            <person name="Stapleton M."/>
            <person name="Yamada C."/>
            <person name="Ashburner M."/>
            <person name="Gelbart W.M."/>
            <person name="Rubin G.M."/>
            <person name="Lewis S.E."/>
        </authorList>
    </citation>
    <scope>GENOME REANNOTATION</scope>
    <scope>ALTERNATIVE SPLICING</scope>
    <source>
        <strain>Berkeley</strain>
    </source>
</reference>
<reference key="4">
    <citation type="journal article" date="2002" name="Genome Biol.">
        <title>A Drosophila full-length cDNA resource.</title>
        <authorList>
            <person name="Stapleton M."/>
            <person name="Carlson J.W."/>
            <person name="Brokstein P."/>
            <person name="Yu C."/>
            <person name="Champe M."/>
            <person name="George R.A."/>
            <person name="Guarin H."/>
            <person name="Kronmiller B."/>
            <person name="Pacleb J.M."/>
            <person name="Park S."/>
            <person name="Wan K.H."/>
            <person name="Rubin G.M."/>
            <person name="Celniker S.E."/>
        </authorList>
    </citation>
    <scope>NUCLEOTIDE SEQUENCE [LARGE SCALE MRNA] (ISOFORMS A AND B)</scope>
    <source>
        <strain>Berkeley</strain>
        <tissue>Embryo</tissue>
    </source>
</reference>
<reference key="5">
    <citation type="submission" date="2003-01" db="EMBL/GenBank/DDBJ databases">
        <authorList>
            <person name="Stapleton M."/>
            <person name="Brokstein P."/>
            <person name="Hong L."/>
            <person name="Agbayani A."/>
            <person name="Carlson J.W."/>
            <person name="Champe M."/>
            <person name="Chavez C."/>
            <person name="Dorsett V."/>
            <person name="Dresnek D."/>
            <person name="Farfan D."/>
            <person name="Frise E."/>
            <person name="George R.A."/>
            <person name="Gonzalez M."/>
            <person name="Guarin H."/>
            <person name="Kronmiller B."/>
            <person name="Li P.W."/>
            <person name="Liao G."/>
            <person name="Miranda A."/>
            <person name="Mungall C.J."/>
            <person name="Nunoo J."/>
            <person name="Pacleb J.M."/>
            <person name="Paragas V."/>
            <person name="Park S."/>
            <person name="Patel S."/>
            <person name="Phouanenavong S."/>
            <person name="Wan K.H."/>
            <person name="Yu C."/>
            <person name="Lewis S.E."/>
            <person name="Rubin G.M."/>
            <person name="Celniker S.E."/>
        </authorList>
    </citation>
    <scope>NUCLEOTIDE SEQUENCE [LARGE SCALE MRNA] (ISOFORM D)</scope>
    <source>
        <strain>Berkeley</strain>
        <tissue>Embryo</tissue>
    </source>
</reference>
<reference key="6">
    <citation type="submission" date="2001-02" db="EMBL/GenBank/DDBJ databases">
        <title>Independent emergence of alternative splicing of arginyl-tRNA-protein transferase in Drosophila melanogaster and mammals.</title>
        <authorList>
            <person name="Picaud F."/>
            <person name="Petit D."/>
            <person name="Maftah A."/>
        </authorList>
    </citation>
    <scope>NUCLEOTIDE SEQUENCE [MRNA] OF 163-484 (ISOFORM C)</scope>
</reference>
<evidence type="ECO:0000250" key="1"/>
<evidence type="ECO:0000303" key="2">
    <source>
    </source>
</evidence>
<evidence type="ECO:0000303" key="3">
    <source>
    </source>
</evidence>
<evidence type="ECO:0000303" key="4">
    <source ref="5"/>
</evidence>
<evidence type="ECO:0000303" key="5">
    <source ref="6"/>
</evidence>
<evidence type="ECO:0000305" key="6"/>
<feature type="chain" id="PRO_0000195090" description="Arginyl-tRNA--protein transferase 1">
    <location>
        <begin position="1"/>
        <end position="484"/>
    </location>
</feature>
<feature type="splice variant" id="VSP_000339" description="In isoform A and isoform C." evidence="2 3 5">
    <location>
        <begin position="175"/>
        <end position="181"/>
    </location>
</feature>
<feature type="splice variant" id="VSP_011157" description="In isoform C and isoform D." evidence="4 5">
    <original>LRLIHVYDDEFRRTLPQSFALYKKYQISIHNDPPKDQDAYKEHLQATPLQ</original>
    <variation>IVLVASSDTERTCADAVIALYRKYQITVHNDNPARLTLASMQRFLVKSPLK</variation>
    <location>
        <begin position="239"/>
        <end position="288"/>
    </location>
</feature>
<gene>
    <name type="primary">Ate1</name>
    <name type="ORF">CG9204</name>
</gene>
<dbReference type="EC" id="2.3.2.8"/>
<dbReference type="EMBL" id="AF079101">
    <property type="protein sequence ID" value="AAD12369.1"/>
    <property type="molecule type" value="mRNA"/>
</dbReference>
<dbReference type="EMBL" id="AE013599">
    <property type="protein sequence ID" value="AAF57496.3"/>
    <property type="molecule type" value="Genomic_DNA"/>
</dbReference>
<dbReference type="EMBL" id="AE013599">
    <property type="protein sequence ID" value="AAF57497.3"/>
    <property type="molecule type" value="Genomic_DNA"/>
</dbReference>
<dbReference type="EMBL" id="AE013599">
    <property type="protein sequence ID" value="AAF57498.2"/>
    <property type="molecule type" value="Genomic_DNA"/>
</dbReference>
<dbReference type="EMBL" id="AY051688">
    <property type="protein sequence ID" value="AAK93112.1"/>
    <property type="molecule type" value="mRNA"/>
</dbReference>
<dbReference type="EMBL" id="BT001498">
    <property type="protein sequence ID" value="AAN71253.1"/>
    <property type="molecule type" value="mRNA"/>
</dbReference>
<dbReference type="EMBL" id="BT003243">
    <property type="protein sequence ID" value="AAO25000.1"/>
    <property type="status" value="ALT_SEQ"/>
    <property type="molecule type" value="mRNA"/>
</dbReference>
<dbReference type="EMBL" id="AF354710">
    <property type="protein sequence ID" value="AAL83965.1"/>
    <property type="molecule type" value="mRNA"/>
</dbReference>
<dbReference type="RefSeq" id="NP_001261101.1">
    <molecule id="O96539-5"/>
    <property type="nucleotide sequence ID" value="NM_001274172.1"/>
</dbReference>
<dbReference type="RefSeq" id="NP_477394.3">
    <molecule id="O96539-2"/>
    <property type="nucleotide sequence ID" value="NM_058046.5"/>
</dbReference>
<dbReference type="RefSeq" id="NP_725939.2">
    <molecule id="O96539-1"/>
    <property type="nucleotide sequence ID" value="NM_166379.3"/>
</dbReference>
<dbReference type="RefSeq" id="NP_725940.2">
    <molecule id="O96539-4"/>
    <property type="nucleotide sequence ID" value="NM_166380.3"/>
</dbReference>
<dbReference type="SMR" id="O96539"/>
<dbReference type="FunCoup" id="O96539">
    <property type="interactions" value="2182"/>
</dbReference>
<dbReference type="STRING" id="7227.FBpp0307617"/>
<dbReference type="PaxDb" id="7227-FBpp0085627"/>
<dbReference type="DNASU" id="37288"/>
<dbReference type="EnsemblMetazoa" id="FBtr0086317">
    <molecule id="O96539-2"/>
    <property type="protein sequence ID" value="FBpp0085626"/>
    <property type="gene ID" value="FBgn0025720"/>
</dbReference>
<dbReference type="EnsemblMetazoa" id="FBtr0086318">
    <molecule id="O96539-1"/>
    <property type="protein sequence ID" value="FBpp0085627"/>
    <property type="gene ID" value="FBgn0025720"/>
</dbReference>
<dbReference type="EnsemblMetazoa" id="FBtr0086319">
    <molecule id="O96539-4"/>
    <property type="protein sequence ID" value="FBpp0089149"/>
    <property type="gene ID" value="FBgn0025720"/>
</dbReference>
<dbReference type="EnsemblMetazoa" id="FBtr0336634">
    <molecule id="O96539-5"/>
    <property type="protein sequence ID" value="FBpp0307617"/>
    <property type="gene ID" value="FBgn0025720"/>
</dbReference>
<dbReference type="GeneID" id="37288"/>
<dbReference type="KEGG" id="dme:Dmel_CG9204"/>
<dbReference type="UCSC" id="CG9204-RA">
    <molecule id="O96539-1"/>
    <property type="organism name" value="d. melanogaster"/>
</dbReference>
<dbReference type="AGR" id="FB:FBgn0025720"/>
<dbReference type="CTD" id="11101"/>
<dbReference type="FlyBase" id="FBgn0025720">
    <property type="gene designation" value="Ate1"/>
</dbReference>
<dbReference type="VEuPathDB" id="VectorBase:FBgn0025720"/>
<dbReference type="eggNOG" id="KOG1193">
    <property type="taxonomic scope" value="Eukaryota"/>
</dbReference>
<dbReference type="GeneTree" id="ENSGT00500000044926"/>
<dbReference type="InParanoid" id="O96539"/>
<dbReference type="OMA" id="KYQTAIH"/>
<dbReference type="OrthoDB" id="74183at2759"/>
<dbReference type="PhylomeDB" id="O96539"/>
<dbReference type="BioGRID-ORCS" id="37288">
    <property type="hits" value="0 hits in 1 CRISPR screen"/>
</dbReference>
<dbReference type="GenomeRNAi" id="37288"/>
<dbReference type="PRO" id="PR:O96539"/>
<dbReference type="Proteomes" id="UP000000803">
    <property type="component" value="Chromosome 2R"/>
</dbReference>
<dbReference type="Bgee" id="FBgn0025720">
    <property type="expression patterns" value="Expressed in male accessory gland secondary cell (Drosophila) in male reproductive gland and 190 other cell types or tissues"/>
</dbReference>
<dbReference type="ExpressionAtlas" id="O96539">
    <property type="expression patterns" value="baseline and differential"/>
</dbReference>
<dbReference type="GO" id="GO:0005737">
    <property type="term" value="C:cytoplasm"/>
    <property type="evidence" value="ECO:0000318"/>
    <property type="project" value="GO_Central"/>
</dbReference>
<dbReference type="GO" id="GO:0004057">
    <property type="term" value="F:arginyl-tRNA--protein transferase activity"/>
    <property type="evidence" value="ECO:0000318"/>
    <property type="project" value="GO_Central"/>
</dbReference>
<dbReference type="GO" id="GO:0010498">
    <property type="term" value="P:proteasomal protein catabolic process"/>
    <property type="evidence" value="ECO:0000318"/>
    <property type="project" value="GO_Central"/>
</dbReference>
<dbReference type="GO" id="GO:0071596">
    <property type="term" value="P:ubiquitin-dependent protein catabolic process via the N-end rule pathway"/>
    <property type="evidence" value="ECO:0000315"/>
    <property type="project" value="FlyBase"/>
</dbReference>
<dbReference type="InterPro" id="IPR016181">
    <property type="entry name" value="Acyl_CoA_acyltransferase"/>
</dbReference>
<dbReference type="InterPro" id="IPR017137">
    <property type="entry name" value="Arg-tRNA-P_Trfase_1_euk"/>
</dbReference>
<dbReference type="InterPro" id="IPR030700">
    <property type="entry name" value="N-end_Aminoacyl_Trfase"/>
</dbReference>
<dbReference type="InterPro" id="IPR007472">
    <property type="entry name" value="N-end_Aminoacyl_Trfase_C"/>
</dbReference>
<dbReference type="InterPro" id="IPR007471">
    <property type="entry name" value="N-end_Aminoacyl_Trfase_N"/>
</dbReference>
<dbReference type="PANTHER" id="PTHR21367">
    <property type="entry name" value="ARGININE-TRNA-PROTEIN TRANSFERASE 1"/>
    <property type="match status" value="1"/>
</dbReference>
<dbReference type="PANTHER" id="PTHR21367:SF1">
    <property type="entry name" value="ARGINYL-TRNA--PROTEIN TRANSFERASE 1"/>
    <property type="match status" value="1"/>
</dbReference>
<dbReference type="Pfam" id="PF04377">
    <property type="entry name" value="ATE_C"/>
    <property type="match status" value="1"/>
</dbReference>
<dbReference type="Pfam" id="PF04376">
    <property type="entry name" value="ATE_N"/>
    <property type="match status" value="1"/>
</dbReference>
<dbReference type="PIRSF" id="PIRSF037207">
    <property type="entry name" value="ATE1_euk"/>
    <property type="match status" value="1"/>
</dbReference>
<dbReference type="SUPFAM" id="SSF55729">
    <property type="entry name" value="Acyl-CoA N-acyltransferases (Nat)"/>
    <property type="match status" value="1"/>
</dbReference>
<protein>
    <recommendedName>
        <fullName>Arginyl-tRNA--protein transferase 1</fullName>
        <shortName>Arginyltransferase 1</shortName>
        <shortName>R-transferase 1</shortName>
        <ecNumber>2.3.2.8</ecNumber>
    </recommendedName>
    <alternativeName>
        <fullName>Arginine-tRNA--protein transferase 1</fullName>
    </alternativeName>
</protein>
<accession>O96539</accession>
<accession>Q7KRL0</accession>
<accession>Q86PB1</accession>
<accession>Q8IH08</accession>
<accession>Q8N0R9</accession>
<accession>Q8T7L5</accession>
<accession>Q9V906</accession>
<accession>Q9V907</accession>
<organism>
    <name type="scientific">Drosophila melanogaster</name>
    <name type="common">Fruit fly</name>
    <dbReference type="NCBI Taxonomy" id="7227"/>
    <lineage>
        <taxon>Eukaryota</taxon>
        <taxon>Metazoa</taxon>
        <taxon>Ecdysozoa</taxon>
        <taxon>Arthropoda</taxon>
        <taxon>Hexapoda</taxon>
        <taxon>Insecta</taxon>
        <taxon>Pterygota</taxon>
        <taxon>Neoptera</taxon>
        <taxon>Endopterygota</taxon>
        <taxon>Diptera</taxon>
        <taxon>Brachycera</taxon>
        <taxon>Muscomorpha</taxon>
        <taxon>Ephydroidea</taxon>
        <taxon>Drosophilidae</taxon>
        <taxon>Drosophila</taxon>
        <taxon>Sophophora</taxon>
    </lineage>
</organism>
<name>ATE1_DROME</name>
<proteinExistence type="evidence at transcript level"/>
<sequence>MSLSIVSYYGSQQSKCGYCAGANCSLSHGMHAYQLDCRDYQDLIDRGWRRCGYYCYKLRNQETCCPCYTIKCNGLEFKLSKSNKRILRRINRFLRDGKRESKPEAGDGDGEADADYAIVAPEVTASEPQPQLPDKSPPVINVEQVASLATAQRKPTKQATAAAVEAPTLGSNKSSLLSSSAAAPISNKPCKKAKQMRLDRRLAKLGDSASYSTKSLTQEKTLRDFLNTDSETNKHRLKLRLIHVYDDEFRRTLPQSFALYKKYQISIHNDPPKDQDAYKEHLQATPLQNEKPWDGPEMGYGSFHQQYWLDDKLIAVGVIDILPGCVSSVYFFYDPDYSFLSLGTYGSLREIELVQSLAEKVPSLKYYYMGFYIHSCPKMRYKGKLSPSYLLCPETYEWLPLTDVIRAKLDEHKYQRLNEDPAARDVNEFLMEHLDEVKLLLGGRTRTDYKHFRQLRGTVSDDDIIIEYSKLVGKECARRMLYVK</sequence>
<keyword id="KW-0012">Acyltransferase</keyword>
<keyword id="KW-0025">Alternative splicing</keyword>
<keyword id="KW-1185">Reference proteome</keyword>
<keyword id="KW-0808">Transferase</keyword>
<keyword id="KW-0833">Ubl conjugation pathway</keyword>
<comment type="function">
    <text evidence="1">Involved in the post-translational conjugation of arginine to the N-terminal aspartate or glutamate of a protein. This arginylation is required for degradation of the protein via the ubiquitin pathway. Does not arginylate cysteine residues (By similarity).</text>
</comment>
<comment type="catalytic activity">
    <reaction>
        <text>an N-terminal L-alpha-aminoacyl-[protein] + L-arginyl-tRNA(Arg) = an N-terminal L-arginyl-L-aminoacyl-[protein] + tRNA(Arg) + H(+)</text>
        <dbReference type="Rhea" id="RHEA:10208"/>
        <dbReference type="Rhea" id="RHEA-COMP:9658"/>
        <dbReference type="Rhea" id="RHEA-COMP:9673"/>
        <dbReference type="Rhea" id="RHEA-COMP:10636"/>
        <dbReference type="Rhea" id="RHEA-COMP:10638"/>
        <dbReference type="ChEBI" id="CHEBI:15378"/>
        <dbReference type="ChEBI" id="CHEBI:78442"/>
        <dbReference type="ChEBI" id="CHEBI:78513"/>
        <dbReference type="ChEBI" id="CHEBI:78597"/>
        <dbReference type="ChEBI" id="CHEBI:83562"/>
        <dbReference type="EC" id="2.3.2.8"/>
    </reaction>
</comment>
<comment type="alternative products">
    <event type="alternative splicing"/>
    <isoform>
        <id>O96539-1</id>
        <name>B</name>
        <sequence type="displayed"/>
    </isoform>
    <isoform>
        <id>O96539-2</id>
        <name>A</name>
        <sequence type="described" ref="VSP_000339"/>
    </isoform>
    <isoform>
        <id>O96539-4</id>
        <name>C</name>
        <sequence type="described" ref="VSP_000339 VSP_011157"/>
    </isoform>
    <isoform>
        <id>O96539-5</id>
        <name>D</name>
        <sequence type="described" ref="VSP_011157"/>
    </isoform>
</comment>
<comment type="similarity">
    <text evidence="6">Belongs to the R-transferase family.</text>
</comment>
<comment type="sequence caution" evidence="6">
    <conflict type="frameshift">
        <sequence resource="EMBL-CDS" id="AAO25000"/>
    </conflict>
</comment>
<comment type="sequence caution" evidence="6">
    <conflict type="miscellaneous discrepancy">
        <sequence resource="EMBL-CDS" id="AAO25000"/>
    </conflict>
    <text>Deletion of many residues.</text>
</comment>